<name>FOX2_CANTR</name>
<dbReference type="EC" id="4.2.1.119"/>
<dbReference type="EC" id="1.1.1.n12"/>
<dbReference type="EMBL" id="M22765">
    <property type="protein sequence ID" value="AAA62847.1"/>
    <property type="molecule type" value="mRNA"/>
</dbReference>
<dbReference type="EMBL" id="X57854">
    <property type="protein sequence ID" value="CAA40989.1"/>
    <property type="molecule type" value="Genomic_DNA"/>
</dbReference>
<dbReference type="PIR" id="S32607">
    <property type="entry name" value="S32607"/>
</dbReference>
<dbReference type="PDB" id="1PN2">
    <property type="method" value="X-ray"/>
    <property type="resolution" value="1.95 A"/>
    <property type="chains" value="A/B/C/D=627-906"/>
</dbReference>
<dbReference type="PDB" id="1PN4">
    <property type="method" value="X-ray"/>
    <property type="resolution" value="2.35 A"/>
    <property type="chains" value="A/B/C/D=627-906"/>
</dbReference>
<dbReference type="PDB" id="2ET6">
    <property type="method" value="X-ray"/>
    <property type="resolution" value="2.22 A"/>
    <property type="chains" value="A=1-604"/>
</dbReference>
<dbReference type="PDBsum" id="1PN2"/>
<dbReference type="PDBsum" id="1PN4"/>
<dbReference type="PDBsum" id="2ET6"/>
<dbReference type="SMR" id="P22414"/>
<dbReference type="VEuPathDB" id="FungiDB:CTMYA2_054890"/>
<dbReference type="VEuPathDB" id="FungiDB:CTRG_05506"/>
<dbReference type="BRENDA" id="4.2.1.119">
    <property type="organism ID" value="1146"/>
</dbReference>
<dbReference type="UniPathway" id="UPA00659"/>
<dbReference type="EvolutionaryTrace" id="P22414"/>
<dbReference type="GO" id="GO:0005777">
    <property type="term" value="C:peroxisome"/>
    <property type="evidence" value="ECO:0007669"/>
    <property type="project" value="UniProtKB-SubCell"/>
</dbReference>
<dbReference type="GO" id="GO:0106386">
    <property type="term" value="F:(3R)-hydroxyacyl-CoA dehydrogenase (NAD+) activity"/>
    <property type="evidence" value="ECO:0007669"/>
    <property type="project" value="RHEA"/>
</dbReference>
<dbReference type="GO" id="GO:0003857">
    <property type="term" value="F:3-hydroxyacyl-CoA dehydrogenase activity"/>
    <property type="evidence" value="ECO:0007669"/>
    <property type="project" value="EnsemblFungi"/>
</dbReference>
<dbReference type="GO" id="GO:0004300">
    <property type="term" value="F:enoyl-CoA hydratase activity"/>
    <property type="evidence" value="ECO:0007669"/>
    <property type="project" value="EnsemblFungi"/>
</dbReference>
<dbReference type="GO" id="GO:0016853">
    <property type="term" value="F:isomerase activity"/>
    <property type="evidence" value="ECO:0007669"/>
    <property type="project" value="UniProtKB-KW"/>
</dbReference>
<dbReference type="GO" id="GO:0006635">
    <property type="term" value="P:fatty acid beta-oxidation"/>
    <property type="evidence" value="ECO:0007669"/>
    <property type="project" value="UniProtKB-UniPathway"/>
</dbReference>
<dbReference type="CDD" id="cd03448">
    <property type="entry name" value="HDE_HSD"/>
    <property type="match status" value="1"/>
</dbReference>
<dbReference type="CDD" id="cd05353">
    <property type="entry name" value="hydroxyacyl-CoA-like_DH_SDR_c-like"/>
    <property type="match status" value="2"/>
</dbReference>
<dbReference type="FunFam" id="3.40.50.720:FF:000410">
    <property type="entry name" value="Peroxisomal multifunctional beta-oxidation protein"/>
    <property type="match status" value="1"/>
</dbReference>
<dbReference type="FunFam" id="3.10.129.10:FF:000013">
    <property type="entry name" value="Peroxisomal multifunctional enzyme type 2"/>
    <property type="match status" value="1"/>
</dbReference>
<dbReference type="FunFam" id="3.40.50.720:FF:000185">
    <property type="entry name" value="peroxisomal multifunctional enzyme type 2"/>
    <property type="match status" value="1"/>
</dbReference>
<dbReference type="Gene3D" id="3.10.129.10">
    <property type="entry name" value="Hotdog Thioesterase"/>
    <property type="match status" value="2"/>
</dbReference>
<dbReference type="Gene3D" id="3.40.50.720">
    <property type="entry name" value="NAD(P)-binding Rossmann-like Domain"/>
    <property type="match status" value="2"/>
</dbReference>
<dbReference type="InterPro" id="IPR029069">
    <property type="entry name" value="HotDog_dom_sf"/>
</dbReference>
<dbReference type="InterPro" id="IPR002539">
    <property type="entry name" value="MaoC-like_dom"/>
</dbReference>
<dbReference type="InterPro" id="IPR054357">
    <property type="entry name" value="MFE-2_N"/>
</dbReference>
<dbReference type="InterPro" id="IPR036291">
    <property type="entry name" value="NAD(P)-bd_dom_sf"/>
</dbReference>
<dbReference type="InterPro" id="IPR051687">
    <property type="entry name" value="Peroxisomal_Beta-Oxidation"/>
</dbReference>
<dbReference type="InterPro" id="IPR020904">
    <property type="entry name" value="Sc_DH/Rdtase_CS"/>
</dbReference>
<dbReference type="InterPro" id="IPR002347">
    <property type="entry name" value="SDR_fam"/>
</dbReference>
<dbReference type="PANTHER" id="PTHR45024">
    <property type="entry name" value="DEHYDROGENASES, SHORT CHAIN"/>
    <property type="match status" value="1"/>
</dbReference>
<dbReference type="PANTHER" id="PTHR45024:SF2">
    <property type="entry name" value="SCP2 DOMAIN-CONTAINING PROTEIN"/>
    <property type="match status" value="1"/>
</dbReference>
<dbReference type="Pfam" id="PF00106">
    <property type="entry name" value="adh_short"/>
    <property type="match status" value="2"/>
</dbReference>
<dbReference type="Pfam" id="PF01575">
    <property type="entry name" value="MaoC_dehydratas"/>
    <property type="match status" value="1"/>
</dbReference>
<dbReference type="Pfam" id="PF22622">
    <property type="entry name" value="MFE-2_hydrat-2_N"/>
    <property type="match status" value="1"/>
</dbReference>
<dbReference type="PRINTS" id="PR00081">
    <property type="entry name" value="GDHRDH"/>
</dbReference>
<dbReference type="PRINTS" id="PR00080">
    <property type="entry name" value="SDRFAMILY"/>
</dbReference>
<dbReference type="SMART" id="SM00822">
    <property type="entry name" value="PKS_KR"/>
    <property type="match status" value="1"/>
</dbReference>
<dbReference type="SUPFAM" id="SSF51735">
    <property type="entry name" value="NAD(P)-binding Rossmann-fold domains"/>
    <property type="match status" value="2"/>
</dbReference>
<dbReference type="SUPFAM" id="SSF54637">
    <property type="entry name" value="Thioesterase/thiol ester dehydrase-isomerase"/>
    <property type="match status" value="2"/>
</dbReference>
<dbReference type="PROSITE" id="PS00061">
    <property type="entry name" value="ADH_SHORT"/>
    <property type="match status" value="2"/>
</dbReference>
<reference key="1">
    <citation type="journal article" date="1988" name="Gene">
        <title>cDNA cloning and primary structure determination of the peroxisomal trifunctional enzyme hydratase-dehydrogenase-epimerase from the yeast Candida tropicalis pK233.</title>
        <authorList>
            <person name="Nuttley W.M."/>
            <person name="Aitchison J.D."/>
            <person name="Rachubinski R.A."/>
        </authorList>
    </citation>
    <scope>NUCLEOTIDE SEQUENCE [MRNA]</scope>
    <source>
        <strain>ATCC 20336 / pK233 / NCYC 997</strain>
    </source>
</reference>
<reference key="2">
    <citation type="journal article" date="1991" name="Gene">
        <title>Glucose-responsive and oleic acid-responsive elements in the gene encoding the peroxisomal trifunctional enzyme of Candida tropicalis.</title>
        <authorList>
            <person name="Aitchison J.D."/>
            <person name="Sloots J.A."/>
            <person name="Nuttley W.M."/>
            <person name="Rachubinski R.A."/>
        </authorList>
    </citation>
    <scope>NUCLEOTIDE SEQUENCE [GENOMIC DNA]</scope>
    <source>
        <strain>ATCC 20336 / pK233 / NCYC 997</strain>
    </source>
</reference>
<reference key="3">
    <citation type="journal article" date="1990" name="FASEB J.">
        <title>A common ancestor for Candida tropicalis and dehydrogenases that synthesize antibiotics and steroids.</title>
        <authorList>
            <person name="Baker M.E."/>
        </authorList>
    </citation>
    <scope>SIMILARITY TO SHORT CHAIN DEHYDROGENASES OF N-TERMINAL DOMAIN</scope>
</reference>
<reference evidence="8 9" key="4">
    <citation type="journal article" date="2004" name="J. Biol. Chem.">
        <title>A two-domain structure of one subunit explains unique features of eukaryotic hydratase 2.</title>
        <authorList>
            <person name="Koski M.K."/>
            <person name="Haapalainen A.M."/>
            <person name="Hiltunen J.K."/>
            <person name="Glumoff T."/>
        </authorList>
    </citation>
    <scope>X-RAY CRYSTALLOGRAPHY (1.95 ANGSTROMS) OF 628-906 OF APOENZYME AND IN COMPLEX WITH (3R)-3-HYDROXYDECANOYL-COA</scope>
    <scope>REACTION MECHANISM</scope>
</reference>
<reference evidence="10" key="5">
    <citation type="journal article" date="2006" name="J. Mol. Biol.">
        <title>Crystal structure of yeast peroxisomal multifunctional enzyme: structural basis for substrate specificity of (3R)-hydroxyacyl-CoA dehydrogenase units.</title>
        <authorList>
            <person name="Ylianttila M.S."/>
            <person name="Pursiainen N.V."/>
            <person name="Haapalainen A.M."/>
            <person name="Juffer A.H."/>
            <person name="Poirier Y."/>
            <person name="Hiltunen J.K."/>
            <person name="Glumoff T."/>
        </authorList>
    </citation>
    <scope>X-RAY CRYSTALLOGRAPHY (2.22 ANGSTROMS) OF 1-604</scope>
</reference>
<evidence type="ECO:0000250" key="1">
    <source>
        <dbReference type="UniProtKB" id="L0E2Z4"/>
    </source>
</evidence>
<evidence type="ECO:0000250" key="2">
    <source>
        <dbReference type="UniProtKB" id="O93868"/>
    </source>
</evidence>
<evidence type="ECO:0000255" key="3"/>
<evidence type="ECO:0000255" key="4">
    <source>
        <dbReference type="PROSITE-ProRule" id="PRU10001"/>
    </source>
</evidence>
<evidence type="ECO:0000256" key="5">
    <source>
        <dbReference type="SAM" id="MobiDB-lite"/>
    </source>
</evidence>
<evidence type="ECO:0000269" key="6">
    <source>
    </source>
</evidence>
<evidence type="ECO:0000305" key="7"/>
<evidence type="ECO:0007744" key="8">
    <source>
        <dbReference type="PDB" id="1PN2"/>
    </source>
</evidence>
<evidence type="ECO:0007744" key="9">
    <source>
        <dbReference type="PDB" id="1PN4"/>
    </source>
</evidence>
<evidence type="ECO:0007744" key="10">
    <source>
        <dbReference type="PDB" id="2ET6"/>
    </source>
</evidence>
<evidence type="ECO:0007829" key="11">
    <source>
        <dbReference type="PDB" id="1PN2"/>
    </source>
</evidence>
<evidence type="ECO:0007829" key="12">
    <source>
        <dbReference type="PDB" id="1PN4"/>
    </source>
</evidence>
<evidence type="ECO:0007829" key="13">
    <source>
        <dbReference type="PDB" id="2ET6"/>
    </source>
</evidence>
<organism>
    <name type="scientific">Candida tropicalis</name>
    <name type="common">Yeast</name>
    <dbReference type="NCBI Taxonomy" id="5482"/>
    <lineage>
        <taxon>Eukaryota</taxon>
        <taxon>Fungi</taxon>
        <taxon>Dikarya</taxon>
        <taxon>Ascomycota</taxon>
        <taxon>Saccharomycotina</taxon>
        <taxon>Pichiomycetes</taxon>
        <taxon>Debaryomycetaceae</taxon>
        <taxon>Candida/Lodderomyces clade</taxon>
        <taxon>Candida</taxon>
    </lineage>
</organism>
<keyword id="KW-0002">3D-structure</keyword>
<keyword id="KW-0276">Fatty acid metabolism</keyword>
<keyword id="KW-0413">Isomerase</keyword>
<keyword id="KW-0443">Lipid metabolism</keyword>
<keyword id="KW-0456">Lyase</keyword>
<keyword id="KW-0511">Multifunctional enzyme</keyword>
<keyword id="KW-0520">NAD</keyword>
<keyword id="KW-0521">NADP</keyword>
<keyword id="KW-0560">Oxidoreductase</keyword>
<keyword id="KW-0576">Peroxisome</keyword>
<keyword id="KW-0677">Repeat</keyword>
<accession>P22414</accession>
<comment type="function">
    <text>Second trifunctional enzyme acting on the beta-oxidation pathway for fatty acids, possessing hydratase-dehydrogenase-epimerase activities. Converts trans-2-enoyl-CoA via D-3-hydroxyacyl-CoA to 3-ketoacyl-CoA.</text>
</comment>
<comment type="catalytic activity">
    <reaction>
        <text>a (3R)-3-hydroxyacyl-CoA = a (2E)-enoyl-CoA + H2O</text>
        <dbReference type="Rhea" id="RHEA:26526"/>
        <dbReference type="ChEBI" id="CHEBI:15377"/>
        <dbReference type="ChEBI" id="CHEBI:57319"/>
        <dbReference type="ChEBI" id="CHEBI:58856"/>
        <dbReference type="EC" id="4.2.1.119"/>
    </reaction>
</comment>
<comment type="catalytic activity">
    <reaction>
        <text>a (3R)-3-hydroxyacyl-CoA + NAD(+) = a 3-oxoacyl-CoA + NADH + H(+)</text>
        <dbReference type="Rhea" id="RHEA:32711"/>
        <dbReference type="ChEBI" id="CHEBI:15378"/>
        <dbReference type="ChEBI" id="CHEBI:57319"/>
        <dbReference type="ChEBI" id="CHEBI:57540"/>
        <dbReference type="ChEBI" id="CHEBI:57945"/>
        <dbReference type="ChEBI" id="CHEBI:90726"/>
        <dbReference type="EC" id="1.1.1.n12"/>
    </reaction>
</comment>
<comment type="pathway">
    <text>Lipid metabolism; fatty acid beta-oxidation.</text>
</comment>
<comment type="subunit">
    <text evidence="6">Monomer.</text>
</comment>
<comment type="subcellular location">
    <subcellularLocation>
        <location>Peroxisome</location>
    </subcellularLocation>
</comment>
<comment type="induction">
    <text>By growth on N-alkanes or fatty acids.</text>
</comment>
<comment type="domain">
    <text>Contains two SDR domains.</text>
</comment>
<comment type="similarity">
    <text evidence="7">Belongs to the short-chain dehydrogenases/reductases (SDR) family.</text>
</comment>
<feature type="chain" id="PRO_0000054698" description="Peroxisomal hydratase-dehydrogenase-epimerase">
    <location>
        <begin position="1"/>
        <end position="906"/>
    </location>
</feature>
<feature type="domain" description="MaoC-like">
    <location>
        <begin position="782"/>
        <end position="893"/>
    </location>
</feature>
<feature type="region of interest" description="Short-chain dehydrogenase like 1">
    <location>
        <begin position="5"/>
        <end position="228"/>
    </location>
</feature>
<feature type="region of interest" description="Short-chain dehydrogenase like 2">
    <location>
        <begin position="319"/>
        <end position="532"/>
    </location>
</feature>
<feature type="region of interest" description="Disordered" evidence="5">
    <location>
        <begin position="600"/>
        <end position="633"/>
    </location>
</feature>
<feature type="short sequence motif" description="Microbody targeting signal" evidence="3">
    <location>
        <begin position="904"/>
        <end position="906"/>
    </location>
</feature>
<feature type="compositionally biased region" description="Acidic residues" evidence="5">
    <location>
        <begin position="603"/>
        <end position="630"/>
    </location>
</feature>
<feature type="active site" description="Proton donor" evidence="2">
    <location>
        <position position="149"/>
    </location>
</feature>
<feature type="active site" description="Proton acceptor" evidence="4">
    <location>
        <position position="163"/>
    </location>
</feature>
<feature type="active site" description="Proton donor" evidence="2">
    <location>
        <position position="163"/>
    </location>
</feature>
<feature type="active site" description="Lowers pKa of active site Tyr" evidence="2">
    <location>
        <position position="167"/>
    </location>
</feature>
<feature type="active site" description="Proton acceptor" evidence="4">
    <location>
        <position position="467"/>
    </location>
</feature>
<feature type="binding site" evidence="1">
    <location>
        <position position="13"/>
    </location>
    <ligand>
        <name>NADP(+)</name>
        <dbReference type="ChEBI" id="CHEBI:58349"/>
    </ligand>
</feature>
<feature type="binding site" evidence="1">
    <location>
        <position position="52"/>
    </location>
    <ligand>
        <name>NADP(+)</name>
        <dbReference type="ChEBI" id="CHEBI:58349"/>
    </ligand>
</feature>
<feature type="binding site" evidence="2">
    <location>
        <position position="98"/>
    </location>
    <ligand>
        <name>NADP(+)</name>
        <dbReference type="ChEBI" id="CHEBI:58349"/>
    </ligand>
</feature>
<feature type="binding site" evidence="1">
    <location>
        <position position="131"/>
    </location>
    <ligand>
        <name>NADP(+)</name>
        <dbReference type="ChEBI" id="CHEBI:58349"/>
    </ligand>
</feature>
<feature type="binding site" evidence="2">
    <location>
        <position position="163"/>
    </location>
    <ligand>
        <name>NADP(+)</name>
        <dbReference type="ChEBI" id="CHEBI:58349"/>
    </ligand>
</feature>
<feature type="binding site" evidence="2">
    <location>
        <position position="167"/>
    </location>
    <ligand>
        <name>NADP(+)</name>
        <dbReference type="ChEBI" id="CHEBI:58349"/>
    </ligand>
</feature>
<feature type="binding site" evidence="6 9">
    <location>
        <position position="699"/>
    </location>
    <ligand>
        <name>(3R)-3-hydroxydecanoyl-CoA</name>
        <dbReference type="ChEBI" id="CHEBI:74272"/>
    </ligand>
</feature>
<feature type="binding site" evidence="6 9">
    <location>
        <position position="700"/>
    </location>
    <ligand>
        <name>(3R)-3-hydroxydecanoyl-CoA</name>
        <dbReference type="ChEBI" id="CHEBI:74272"/>
    </ligand>
</feature>
<feature type="binding site" evidence="6 9">
    <location>
        <position position="729"/>
    </location>
    <ligand>
        <name>(3R)-3-hydroxydecanoyl-CoA</name>
        <dbReference type="ChEBI" id="CHEBI:74272"/>
    </ligand>
</feature>
<feature type="binding site" evidence="6 9">
    <location>
        <position position="757"/>
    </location>
    <ligand>
        <name>(3R)-3-hydroxydecanoyl-CoA</name>
        <dbReference type="ChEBI" id="CHEBI:74272"/>
    </ligand>
</feature>
<feature type="binding site" evidence="6 9">
    <location>
        <position position="808"/>
    </location>
    <ligand>
        <name>(3R)-3-hydroxydecanoyl-CoA</name>
        <dbReference type="ChEBI" id="CHEBI:74272"/>
    </ligand>
</feature>
<feature type="binding site" evidence="6 9">
    <location>
        <position position="810"/>
    </location>
    <ligand>
        <name>(3R)-3-hydroxydecanoyl-CoA</name>
        <dbReference type="ChEBI" id="CHEBI:74272"/>
    </ligand>
</feature>
<feature type="binding site" evidence="6 9">
    <location>
        <position position="831"/>
    </location>
    <ligand>
        <name>(3R)-3-hydroxydecanoyl-CoA</name>
        <dbReference type="ChEBI" id="CHEBI:74272"/>
    </ligand>
</feature>
<feature type="binding site" evidence="6 9">
    <location>
        <position position="856"/>
    </location>
    <ligand>
        <name>(3R)-3-hydroxydecanoyl-CoA</name>
        <dbReference type="ChEBI" id="CHEBI:74272"/>
    </ligand>
</feature>
<feature type="binding site" evidence="6 9">
    <location>
        <position position="857"/>
    </location>
    <ligand>
        <name>(3R)-3-hydroxydecanoyl-CoA</name>
        <dbReference type="ChEBI" id="CHEBI:74272"/>
    </ligand>
</feature>
<feature type="binding site" evidence="6 9">
    <location>
        <position position="858"/>
    </location>
    <ligand>
        <name>(3R)-3-hydroxydecanoyl-CoA</name>
        <dbReference type="ChEBI" id="CHEBI:74272"/>
    </ligand>
</feature>
<feature type="sequence conflict" description="In Ref. 1; AAA62847." evidence="7" ref="1">
    <original>F</original>
    <variation>S</variation>
    <location>
        <position position="540"/>
    </location>
</feature>
<feature type="strand" evidence="13">
    <location>
        <begin position="10"/>
        <end position="13"/>
    </location>
</feature>
<feature type="turn" evidence="13">
    <location>
        <begin position="14"/>
        <end position="17"/>
    </location>
</feature>
<feature type="helix" evidence="13">
    <location>
        <begin position="19"/>
        <end position="30"/>
    </location>
</feature>
<feature type="strand" evidence="13">
    <location>
        <begin position="34"/>
        <end position="38"/>
    </location>
</feature>
<feature type="helix" evidence="13">
    <location>
        <begin position="53"/>
        <end position="63"/>
    </location>
</feature>
<feature type="strand" evidence="13">
    <location>
        <begin position="67"/>
        <end position="71"/>
    </location>
</feature>
<feature type="helix" evidence="13">
    <location>
        <begin position="78"/>
        <end position="89"/>
    </location>
</feature>
<feature type="strand" evidence="13">
    <location>
        <begin position="94"/>
        <end position="97"/>
    </location>
</feature>
<feature type="turn" evidence="13">
    <location>
        <begin position="107"/>
        <end position="109"/>
    </location>
</feature>
<feature type="helix" evidence="13">
    <location>
        <begin position="112"/>
        <end position="122"/>
    </location>
</feature>
<feature type="helix" evidence="13">
    <location>
        <begin position="124"/>
        <end position="140"/>
    </location>
</feature>
<feature type="strand" evidence="13">
    <location>
        <begin position="143"/>
        <end position="148"/>
    </location>
</feature>
<feature type="helix" evidence="13">
    <location>
        <begin position="151"/>
        <end position="155"/>
    </location>
</feature>
<feature type="helix" evidence="13">
    <location>
        <begin position="161"/>
        <end position="181"/>
    </location>
</feature>
<feature type="helix" evidence="13">
    <location>
        <begin position="182"/>
        <end position="184"/>
    </location>
</feature>
<feature type="strand" evidence="13">
    <location>
        <begin position="186"/>
        <end position="193"/>
    </location>
</feature>
<feature type="helix" evidence="13">
    <location>
        <begin position="198"/>
        <end position="201"/>
    </location>
</feature>
<feature type="helix" evidence="13">
    <location>
        <begin position="206"/>
        <end position="209"/>
    </location>
</feature>
<feature type="helix" evidence="13">
    <location>
        <begin position="214"/>
        <end position="224"/>
    </location>
</feature>
<feature type="strand" evidence="13">
    <location>
        <begin position="226"/>
        <end position="228"/>
    </location>
</feature>
<feature type="strand" evidence="13">
    <location>
        <begin position="235"/>
        <end position="239"/>
    </location>
</feature>
<feature type="strand" evidence="13">
    <location>
        <begin position="242"/>
        <end position="250"/>
    </location>
</feature>
<feature type="helix" evidence="13">
    <location>
        <begin position="264"/>
        <end position="274"/>
    </location>
</feature>
<feature type="helix" evidence="13">
    <location>
        <begin position="284"/>
        <end position="286"/>
    </location>
</feature>
<feature type="strand" evidence="13">
    <location>
        <begin position="292"/>
        <end position="294"/>
    </location>
</feature>
<feature type="helix" evidence="13">
    <location>
        <begin position="297"/>
        <end position="304"/>
    </location>
</feature>
<feature type="strand" evidence="13">
    <location>
        <begin position="324"/>
        <end position="329"/>
    </location>
</feature>
<feature type="helix" evidence="13">
    <location>
        <begin position="333"/>
        <end position="344"/>
    </location>
</feature>
<feature type="strand" evidence="13">
    <location>
        <begin position="348"/>
        <end position="352"/>
    </location>
</feature>
<feature type="helix" evidence="13">
    <location>
        <begin position="358"/>
        <end position="366"/>
    </location>
</feature>
<feature type="strand" evidence="13">
    <location>
        <begin position="370"/>
        <end position="374"/>
    </location>
</feature>
<feature type="helix" evidence="13">
    <location>
        <begin position="378"/>
        <end position="393"/>
    </location>
</feature>
<feature type="strand" evidence="13">
    <location>
        <begin position="398"/>
        <end position="401"/>
    </location>
</feature>
<feature type="turn" evidence="13">
    <location>
        <begin position="411"/>
        <end position="413"/>
    </location>
</feature>
<feature type="helix" evidence="13">
    <location>
        <begin position="416"/>
        <end position="426"/>
    </location>
</feature>
<feature type="helix" evidence="13">
    <location>
        <begin position="428"/>
        <end position="443"/>
    </location>
</feature>
<feature type="strand" evidence="13">
    <location>
        <begin position="447"/>
        <end position="452"/>
    </location>
</feature>
<feature type="helix" evidence="13">
    <location>
        <begin position="455"/>
        <end position="458"/>
    </location>
</feature>
<feature type="helix" evidence="13">
    <location>
        <begin position="465"/>
        <end position="485"/>
    </location>
</feature>
<feature type="helix" evidence="13">
    <location>
        <begin position="486"/>
        <end position="488"/>
    </location>
</feature>
<feature type="strand" evidence="13">
    <location>
        <begin position="490"/>
        <end position="497"/>
    </location>
</feature>
<feature type="helix" evidence="13">
    <location>
        <begin position="518"/>
        <end position="520"/>
    </location>
</feature>
<feature type="helix" evidence="13">
    <location>
        <begin position="522"/>
        <end position="527"/>
    </location>
</feature>
<feature type="strand" evidence="13">
    <location>
        <begin position="539"/>
        <end position="543"/>
    </location>
</feature>
<feature type="strand" evidence="13">
    <location>
        <begin position="546"/>
        <end position="554"/>
    </location>
</feature>
<feature type="strand" evidence="13">
    <location>
        <begin position="562"/>
        <end position="564"/>
    </location>
</feature>
<feature type="helix" evidence="13">
    <location>
        <begin position="567"/>
        <end position="577"/>
    </location>
</feature>
<feature type="strand" evidence="13">
    <location>
        <begin position="581"/>
        <end position="583"/>
    </location>
</feature>
<feature type="helix" evidence="13">
    <location>
        <begin position="590"/>
        <end position="602"/>
    </location>
</feature>
<feature type="strand" evidence="11">
    <location>
        <begin position="632"/>
        <end position="635"/>
    </location>
</feature>
<feature type="helix" evidence="11">
    <location>
        <begin position="637"/>
        <end position="646"/>
    </location>
</feature>
<feature type="helix" evidence="12">
    <location>
        <begin position="651"/>
        <end position="653"/>
    </location>
</feature>
<feature type="helix" evidence="11">
    <location>
        <begin position="654"/>
        <end position="657"/>
    </location>
</feature>
<feature type="helix" evidence="11">
    <location>
        <begin position="668"/>
        <end position="675"/>
    </location>
</feature>
<feature type="helix" evidence="11">
    <location>
        <begin position="679"/>
        <end position="682"/>
    </location>
</feature>
<feature type="turn" evidence="11">
    <location>
        <begin position="683"/>
        <end position="687"/>
    </location>
</feature>
<feature type="strand" evidence="11">
    <location>
        <begin position="688"/>
        <end position="691"/>
    </location>
</feature>
<feature type="helix" evidence="11">
    <location>
        <begin position="694"/>
        <end position="696"/>
    </location>
</feature>
<feature type="strand" evidence="11">
    <location>
        <begin position="697"/>
        <end position="706"/>
    </location>
</feature>
<feature type="strand" evidence="11">
    <location>
        <begin position="708"/>
        <end position="710"/>
    </location>
</feature>
<feature type="strand" evidence="11">
    <location>
        <begin position="713"/>
        <end position="729"/>
    </location>
</feature>
<feature type="strand" evidence="11">
    <location>
        <begin position="732"/>
        <end position="743"/>
    </location>
</feature>
<feature type="turn" evidence="11">
    <location>
        <begin position="744"/>
        <end position="746"/>
    </location>
</feature>
<feature type="strand" evidence="11">
    <location>
        <begin position="749"/>
        <end position="759"/>
    </location>
</feature>
<feature type="helix" evidence="11">
    <location>
        <begin position="774"/>
        <end position="777"/>
    </location>
</feature>
<feature type="strand" evidence="11">
    <location>
        <begin position="788"/>
        <end position="794"/>
    </location>
</feature>
<feature type="helix" evidence="11">
    <location>
        <begin position="799"/>
        <end position="803"/>
    </location>
</feature>
<feature type="helix" evidence="11">
    <location>
        <begin position="804"/>
        <end position="806"/>
    </location>
</feature>
<feature type="helix" evidence="11">
    <location>
        <begin position="811"/>
        <end position="813"/>
    </location>
</feature>
<feature type="helix" evidence="11">
    <location>
        <begin position="816"/>
        <end position="821"/>
    </location>
</feature>
<feature type="helix" evidence="11">
    <location>
        <begin position="831"/>
        <end position="846"/>
    </location>
</feature>
<feature type="strand" evidence="11">
    <location>
        <begin position="849"/>
        <end position="856"/>
    </location>
</feature>
<feature type="strand" evidence="11">
    <location>
        <begin position="865"/>
        <end position="872"/>
    </location>
</feature>
<feature type="strand" evidence="11">
    <location>
        <begin position="874"/>
        <end position="884"/>
    </location>
</feature>
<feature type="turn" evidence="11">
    <location>
        <begin position="885"/>
        <end position="888"/>
    </location>
</feature>
<feature type="strand" evidence="11">
    <location>
        <begin position="889"/>
        <end position="899"/>
    </location>
</feature>
<sequence length="906" mass="99469">MSPVDFKDKVVIITGAGGGLGKYYSLEFAKLGAKVVVNDLGGALNGQGGNSKAADVVVDEIVKNGGVAVADYNNVLDGDKIVETAVKNFGTVHVIINNAGILRDASMKKMTEKDYKLVIDVHLNGAFAVTKAAWPYFQKQKYGRIVNTSSPAGLYGNFGQANYASAKSALLGFAETLAKEGAKYNIKANAIAPLARSRMTESILPPPMLEKLGPEKVAPLVLYLSSAENELTGQFFEVAAGFYAQIRWERSGGVLFKPDQSFTAEVVAKRFSEILDYDDSRKPEYLKNQYPFMLNDYATLTNEARKLPANDASGAPTVSLKDKVVLITGAGAGLGKEYAKWFAKYGAKVVVNDFKDATKTVDEIKAAGGEAWPDQHDVAKDSEAIIKNVIDKYGTIDILVNNAGILRDRSFAKMSKQEWDSVQQVHLIGTFNLSRLAWPYFVEKQFGRIINITSTSGIYGNFGQANYSSSKAGILGLSKTMAIEGAKNNIKVNIVAPHAETAMTLTIFREQDKNLYHADQVAPLLVYLGTDDVPVTGETFEIGGGWIGNTRWQRAKGAVSHDEHTTVEFIKEHLNEITDFTTDTENPKSTTESSMAILSAVGGDDDDDDEDEEEDEGDEEEDEEDEEEDDPVWRFDDRDVILYNIALGATTKQLKYVYENDSDFQVIPTFGHLITFNSGKSQNSFAKLLRNFNPMLLLHGEHYLKVHSWPPPTEGEIKTTFEPIATTPKGTNVVIVHGSKSVDNKSGELIYSNEATYFIRNCQADNKVYADRPAFATNQFLAPKRAPDYQVDVPVSEDLAALYRLSGDRNPLHIDPNFAKGAKFPKPILHGMCTYGLSAKALIDKFGMFNEIKARFTGIVFPGETLRVLAWKESDDTIVFQTHVVDRGTIAINNAAIKLVGDKAKI</sequence>
<protein>
    <recommendedName>
        <fullName>Peroxisomal hydratase-dehydrogenase-epimerase</fullName>
        <shortName>HDE</shortName>
    </recommendedName>
    <alternativeName>
        <fullName>Multifunctional beta-oxidation protein</fullName>
        <shortName>MFP</shortName>
    </alternativeName>
    <domain>
        <recommendedName>
            <fullName>2-enoyl-CoA hydratase</fullName>
            <ecNumber>4.2.1.119</ecNumber>
        </recommendedName>
    </domain>
    <domain>
        <recommendedName>
            <fullName>(3R)-3-hydroxyacyl-CoA dehydrogenase</fullName>
            <ecNumber>1.1.1.n12</ecNumber>
        </recommendedName>
    </domain>
</protein>
<proteinExistence type="evidence at protein level"/>